<evidence type="ECO:0000255" key="1">
    <source>
        <dbReference type="HAMAP-Rule" id="MF_00599"/>
    </source>
</evidence>
<dbReference type="EMBL" id="L42023">
    <property type="protein sequence ID" value="AAC22333.1"/>
    <property type="molecule type" value="Genomic_DNA"/>
</dbReference>
<dbReference type="PIR" id="H64011">
    <property type="entry name" value="H64011"/>
</dbReference>
<dbReference type="RefSeq" id="NP_438833.1">
    <property type="nucleotide sequence ID" value="NC_000907.1"/>
</dbReference>
<dbReference type="SMR" id="P44035"/>
<dbReference type="STRING" id="71421.HI_0673"/>
<dbReference type="EnsemblBacteria" id="AAC22333">
    <property type="protein sequence ID" value="AAC22333"/>
    <property type="gene ID" value="HI_0673"/>
</dbReference>
<dbReference type="KEGG" id="hin:HI_0673"/>
<dbReference type="PATRIC" id="fig|71421.8.peg.703"/>
<dbReference type="eggNOG" id="COG2919">
    <property type="taxonomic scope" value="Bacteria"/>
</dbReference>
<dbReference type="HOGENOM" id="CLU_134863_5_2_6"/>
<dbReference type="OrthoDB" id="7061211at2"/>
<dbReference type="PhylomeDB" id="P44035"/>
<dbReference type="BioCyc" id="HINF71421:G1GJ1-708-MONOMER"/>
<dbReference type="Proteomes" id="UP000000579">
    <property type="component" value="Chromosome"/>
</dbReference>
<dbReference type="GO" id="GO:0032153">
    <property type="term" value="C:cell division site"/>
    <property type="evidence" value="ECO:0007669"/>
    <property type="project" value="UniProtKB-UniRule"/>
</dbReference>
<dbReference type="GO" id="GO:0030428">
    <property type="term" value="C:cell septum"/>
    <property type="evidence" value="ECO:0000318"/>
    <property type="project" value="GO_Central"/>
</dbReference>
<dbReference type="GO" id="GO:0005886">
    <property type="term" value="C:plasma membrane"/>
    <property type="evidence" value="ECO:0007669"/>
    <property type="project" value="UniProtKB-SubCell"/>
</dbReference>
<dbReference type="GO" id="GO:0043093">
    <property type="term" value="P:FtsZ-dependent cytokinesis"/>
    <property type="evidence" value="ECO:0000318"/>
    <property type="project" value="GO_Central"/>
</dbReference>
<dbReference type="HAMAP" id="MF_00599">
    <property type="entry name" value="FtsB"/>
    <property type="match status" value="1"/>
</dbReference>
<dbReference type="InterPro" id="IPR023081">
    <property type="entry name" value="Cell_div_FtsB"/>
</dbReference>
<dbReference type="InterPro" id="IPR007060">
    <property type="entry name" value="FtsL/DivIC"/>
</dbReference>
<dbReference type="NCBIfam" id="NF002058">
    <property type="entry name" value="PRK00888.1"/>
    <property type="match status" value="1"/>
</dbReference>
<dbReference type="PANTHER" id="PTHR37485">
    <property type="entry name" value="CELL DIVISION PROTEIN FTSB"/>
    <property type="match status" value="1"/>
</dbReference>
<dbReference type="PANTHER" id="PTHR37485:SF1">
    <property type="entry name" value="CELL DIVISION PROTEIN FTSB"/>
    <property type="match status" value="1"/>
</dbReference>
<dbReference type="Pfam" id="PF04977">
    <property type="entry name" value="DivIC"/>
    <property type="match status" value="1"/>
</dbReference>
<gene>
    <name evidence="1" type="primary">ftsB</name>
    <name type="ordered locus">HI_0673</name>
</gene>
<sequence length="92" mass="10916">MRLLILILLSVLVLFQYNFWFGSNGFLDYRQNAEKIKENQAENEKLSQRNQRINAEIQGLTKGFEAIEERARMQHGLVKENEVFYHIVKESK</sequence>
<comment type="function">
    <text evidence="1">Essential cell division protein. May link together the upstream cell division proteins, which are predominantly cytoplasmic, with the downstream cell division proteins, which are predominantly periplasmic.</text>
</comment>
<comment type="subunit">
    <text evidence="1">Part of a complex composed of FtsB, FtsL and FtsQ.</text>
</comment>
<comment type="subcellular location">
    <subcellularLocation>
        <location evidence="1">Cell inner membrane</location>
        <topology evidence="1">Single-pass type II membrane protein</topology>
    </subcellularLocation>
    <text evidence="1">Localizes to the division septum.</text>
</comment>
<comment type="similarity">
    <text evidence="1">Belongs to the FtsB family.</text>
</comment>
<keyword id="KW-0131">Cell cycle</keyword>
<keyword id="KW-0132">Cell division</keyword>
<keyword id="KW-0997">Cell inner membrane</keyword>
<keyword id="KW-1003">Cell membrane</keyword>
<keyword id="KW-0175">Coiled coil</keyword>
<keyword id="KW-0472">Membrane</keyword>
<keyword id="KW-1185">Reference proteome</keyword>
<keyword id="KW-0812">Transmembrane</keyword>
<keyword id="KW-1133">Transmembrane helix</keyword>
<proteinExistence type="inferred from homology"/>
<organism>
    <name type="scientific">Haemophilus influenzae (strain ATCC 51907 / DSM 11121 / KW20 / Rd)</name>
    <dbReference type="NCBI Taxonomy" id="71421"/>
    <lineage>
        <taxon>Bacteria</taxon>
        <taxon>Pseudomonadati</taxon>
        <taxon>Pseudomonadota</taxon>
        <taxon>Gammaproteobacteria</taxon>
        <taxon>Pasteurellales</taxon>
        <taxon>Pasteurellaceae</taxon>
        <taxon>Haemophilus</taxon>
    </lineage>
</organism>
<feature type="chain" id="PRO_0000214445" description="Cell division protein FtsB">
    <location>
        <begin position="1"/>
        <end position="92"/>
    </location>
</feature>
<feature type="topological domain" description="Cytoplasmic" evidence="1">
    <location>
        <begin position="1"/>
        <end position="3"/>
    </location>
</feature>
<feature type="transmembrane region" description="Helical" evidence="1">
    <location>
        <begin position="4"/>
        <end position="21"/>
    </location>
</feature>
<feature type="topological domain" description="Periplasmic" evidence="1">
    <location>
        <begin position="22"/>
        <end position="92"/>
    </location>
</feature>
<feature type="coiled-coil region" evidence="1">
    <location>
        <begin position="28"/>
        <end position="63"/>
    </location>
</feature>
<accession>P44035</accession>
<protein>
    <recommendedName>
        <fullName evidence="1">Cell division protein FtsB</fullName>
    </recommendedName>
</protein>
<reference key="1">
    <citation type="journal article" date="1995" name="Science">
        <title>Whole-genome random sequencing and assembly of Haemophilus influenzae Rd.</title>
        <authorList>
            <person name="Fleischmann R.D."/>
            <person name="Adams M.D."/>
            <person name="White O."/>
            <person name="Clayton R.A."/>
            <person name="Kirkness E.F."/>
            <person name="Kerlavage A.R."/>
            <person name="Bult C.J."/>
            <person name="Tomb J.-F."/>
            <person name="Dougherty B.A."/>
            <person name="Merrick J.M."/>
            <person name="McKenney K."/>
            <person name="Sutton G.G."/>
            <person name="FitzHugh W."/>
            <person name="Fields C.A."/>
            <person name="Gocayne J.D."/>
            <person name="Scott J.D."/>
            <person name="Shirley R."/>
            <person name="Liu L.-I."/>
            <person name="Glodek A."/>
            <person name="Kelley J.M."/>
            <person name="Weidman J.F."/>
            <person name="Phillips C.A."/>
            <person name="Spriggs T."/>
            <person name="Hedblom E."/>
            <person name="Cotton M.D."/>
            <person name="Utterback T.R."/>
            <person name="Hanna M.C."/>
            <person name="Nguyen D.T."/>
            <person name="Saudek D.M."/>
            <person name="Brandon R.C."/>
            <person name="Fine L.D."/>
            <person name="Fritchman J.L."/>
            <person name="Fuhrmann J.L."/>
            <person name="Geoghagen N.S.M."/>
            <person name="Gnehm C.L."/>
            <person name="McDonald L.A."/>
            <person name="Small K.V."/>
            <person name="Fraser C.M."/>
            <person name="Smith H.O."/>
            <person name="Venter J.C."/>
        </authorList>
    </citation>
    <scope>NUCLEOTIDE SEQUENCE [LARGE SCALE GENOMIC DNA]</scope>
    <source>
        <strain>ATCC 51907 / DSM 11121 / KW20 / Rd</strain>
    </source>
</reference>
<name>FTSB_HAEIN</name>